<gene>
    <name evidence="1" type="primary">rplW</name>
    <name type="ordered locus">Paes_2062</name>
</gene>
<sequence length="109" mass="12118">MRNPLMQPWLTEKSTGLTEQKGQYVFKVKSAANKTEIKAAVEAKFGVDVASVRTVNCLGKTKRQFTRKGVLAGKKNDWKKAFITLKEGQAIDYYSGSTDQGEEKKSNKG</sequence>
<evidence type="ECO:0000255" key="1">
    <source>
        <dbReference type="HAMAP-Rule" id="MF_01369"/>
    </source>
</evidence>
<evidence type="ECO:0000305" key="2"/>
<reference key="1">
    <citation type="submission" date="2008-06" db="EMBL/GenBank/DDBJ databases">
        <title>Complete sequence of chromosome of Prosthecochloris aestuarii DSM 271.</title>
        <authorList>
            <consortium name="US DOE Joint Genome Institute"/>
            <person name="Lucas S."/>
            <person name="Copeland A."/>
            <person name="Lapidus A."/>
            <person name="Glavina del Rio T."/>
            <person name="Dalin E."/>
            <person name="Tice H."/>
            <person name="Bruce D."/>
            <person name="Goodwin L."/>
            <person name="Pitluck S."/>
            <person name="Schmutz J."/>
            <person name="Larimer F."/>
            <person name="Land M."/>
            <person name="Hauser L."/>
            <person name="Kyrpides N."/>
            <person name="Anderson I."/>
            <person name="Liu Z."/>
            <person name="Li T."/>
            <person name="Zhao F."/>
            <person name="Overmann J."/>
            <person name="Bryant D.A."/>
            <person name="Richardson P."/>
        </authorList>
    </citation>
    <scope>NUCLEOTIDE SEQUENCE [LARGE SCALE GENOMIC DNA]</scope>
    <source>
        <strain>DSM 271 / SK 413</strain>
    </source>
</reference>
<feature type="chain" id="PRO_1000144598" description="Large ribosomal subunit protein uL23">
    <location>
        <begin position="1"/>
        <end position="109"/>
    </location>
</feature>
<protein>
    <recommendedName>
        <fullName evidence="1">Large ribosomal subunit protein uL23</fullName>
    </recommendedName>
    <alternativeName>
        <fullName evidence="2">50S ribosomal protein L23</fullName>
    </alternativeName>
</protein>
<organism>
    <name type="scientific">Prosthecochloris aestuarii (strain DSM 271 / SK 413)</name>
    <dbReference type="NCBI Taxonomy" id="290512"/>
    <lineage>
        <taxon>Bacteria</taxon>
        <taxon>Pseudomonadati</taxon>
        <taxon>Chlorobiota</taxon>
        <taxon>Chlorobiia</taxon>
        <taxon>Chlorobiales</taxon>
        <taxon>Chlorobiaceae</taxon>
        <taxon>Prosthecochloris</taxon>
    </lineage>
</organism>
<accession>B4S5M5</accession>
<proteinExistence type="inferred from homology"/>
<comment type="function">
    <text evidence="1">One of the early assembly proteins it binds 23S rRNA. One of the proteins that surrounds the polypeptide exit tunnel on the outside of the ribosome. Forms the main docking site for trigger factor binding to the ribosome.</text>
</comment>
<comment type="subunit">
    <text evidence="1">Part of the 50S ribosomal subunit. Contacts protein L29, and trigger factor when it is bound to the ribosome.</text>
</comment>
<comment type="similarity">
    <text evidence="1">Belongs to the universal ribosomal protein uL23 family.</text>
</comment>
<name>RL23_PROA2</name>
<dbReference type="EMBL" id="CP001108">
    <property type="protein sequence ID" value="ACF47072.1"/>
    <property type="molecule type" value="Genomic_DNA"/>
</dbReference>
<dbReference type="RefSeq" id="WP_012506604.1">
    <property type="nucleotide sequence ID" value="NC_011059.1"/>
</dbReference>
<dbReference type="SMR" id="B4S5M5"/>
<dbReference type="STRING" id="290512.Paes_2062"/>
<dbReference type="KEGG" id="paa:Paes_2062"/>
<dbReference type="eggNOG" id="COG0089">
    <property type="taxonomic scope" value="Bacteria"/>
</dbReference>
<dbReference type="HOGENOM" id="CLU_037562_3_1_10"/>
<dbReference type="Proteomes" id="UP000002725">
    <property type="component" value="Chromosome"/>
</dbReference>
<dbReference type="GO" id="GO:1990904">
    <property type="term" value="C:ribonucleoprotein complex"/>
    <property type="evidence" value="ECO:0007669"/>
    <property type="project" value="UniProtKB-KW"/>
</dbReference>
<dbReference type="GO" id="GO:0005840">
    <property type="term" value="C:ribosome"/>
    <property type="evidence" value="ECO:0007669"/>
    <property type="project" value="UniProtKB-KW"/>
</dbReference>
<dbReference type="GO" id="GO:0019843">
    <property type="term" value="F:rRNA binding"/>
    <property type="evidence" value="ECO:0007669"/>
    <property type="project" value="UniProtKB-UniRule"/>
</dbReference>
<dbReference type="GO" id="GO:0003735">
    <property type="term" value="F:structural constituent of ribosome"/>
    <property type="evidence" value="ECO:0007669"/>
    <property type="project" value="InterPro"/>
</dbReference>
<dbReference type="GO" id="GO:0006412">
    <property type="term" value="P:translation"/>
    <property type="evidence" value="ECO:0007669"/>
    <property type="project" value="UniProtKB-UniRule"/>
</dbReference>
<dbReference type="FunFam" id="3.30.70.330:FF:000001">
    <property type="entry name" value="50S ribosomal protein L23"/>
    <property type="match status" value="1"/>
</dbReference>
<dbReference type="Gene3D" id="3.30.70.330">
    <property type="match status" value="1"/>
</dbReference>
<dbReference type="HAMAP" id="MF_01369_B">
    <property type="entry name" value="Ribosomal_uL23_B"/>
    <property type="match status" value="1"/>
</dbReference>
<dbReference type="InterPro" id="IPR012677">
    <property type="entry name" value="Nucleotide-bd_a/b_plait_sf"/>
</dbReference>
<dbReference type="InterPro" id="IPR013025">
    <property type="entry name" value="Ribosomal_uL23-like"/>
</dbReference>
<dbReference type="InterPro" id="IPR012678">
    <property type="entry name" value="Ribosomal_uL23/eL15/eS24_sf"/>
</dbReference>
<dbReference type="NCBIfam" id="NF004359">
    <property type="entry name" value="PRK05738.1-3"/>
    <property type="match status" value="1"/>
</dbReference>
<dbReference type="NCBIfam" id="NF004363">
    <property type="entry name" value="PRK05738.2-4"/>
    <property type="match status" value="1"/>
</dbReference>
<dbReference type="PANTHER" id="PTHR11620">
    <property type="entry name" value="60S RIBOSOMAL PROTEIN L23A"/>
    <property type="match status" value="1"/>
</dbReference>
<dbReference type="Pfam" id="PF00276">
    <property type="entry name" value="Ribosomal_L23"/>
    <property type="match status" value="1"/>
</dbReference>
<dbReference type="SUPFAM" id="SSF54189">
    <property type="entry name" value="Ribosomal proteins S24e, L23 and L15e"/>
    <property type="match status" value="1"/>
</dbReference>
<keyword id="KW-0687">Ribonucleoprotein</keyword>
<keyword id="KW-0689">Ribosomal protein</keyword>
<keyword id="KW-0694">RNA-binding</keyword>
<keyword id="KW-0699">rRNA-binding</keyword>